<proteinExistence type="inferred from homology"/>
<keyword id="KW-0067">ATP-binding</keyword>
<keyword id="KW-1003">Cell membrane</keyword>
<keyword id="KW-0418">Kinase</keyword>
<keyword id="KW-0472">Membrane</keyword>
<keyword id="KW-0547">Nucleotide-binding</keyword>
<keyword id="KW-0597">Phosphoprotein</keyword>
<keyword id="KW-1185">Reference proteome</keyword>
<keyword id="KW-0808">Transferase</keyword>
<keyword id="KW-0812">Transmembrane</keyword>
<keyword id="KW-1133">Transmembrane helix</keyword>
<keyword id="KW-0902">Two-component regulatory system</keyword>
<sequence length="432" mass="49723">MAHLKFTLTKKLALLIMVAAIVSGVIFLTLQKITDDLIEGYLSSEEYYHEESARYIQKFSKYVSENELSTSDRKAFGEWVKKENYINLTIFKDQELQYDSIYSESDYGKEKLTQYAQNHSHPVKFSDGEGRVIIDGFYSSRYYDLAFALDLLGATLIFLIIVLFGIRQSLRYLKTIHQEIHILEGGELDYEMTIKGHDELAMIAKSIEDLRKAFLDKLKAIEELQAESRSLVTEMSHDMRTPLTSLIMNLEFAKKEGGEAGASKDRYVANAYGKALQLKSLSDNLFAYFLLNKEYEADLETVAVKEVIYDLISDQIAILHQEHFRVHISGELPETYINVNLEELGRVFDNVMSNLLKYADPEEKISITFVSDQEIFEIHVSNTIKLADITPESNGLGERSIARMMSRMQGQFHSIQKNSKYYIVLRFWNTKM</sequence>
<feature type="chain" id="PRO_0000049879" description="Sensor histidine kinase YrkQ">
    <location>
        <begin position="1"/>
        <end position="432"/>
    </location>
</feature>
<feature type="topological domain" description="Cytoplasmic" evidence="2">
    <location>
        <begin position="1"/>
        <end position="12"/>
    </location>
</feature>
<feature type="transmembrane region" description="Helical" evidence="2">
    <location>
        <begin position="13"/>
        <end position="33"/>
    </location>
</feature>
<feature type="topological domain" description="Extracellular" evidence="2">
    <location>
        <begin position="34"/>
        <end position="145"/>
    </location>
</feature>
<feature type="transmembrane region" description="Helical" evidence="2">
    <location>
        <begin position="146"/>
        <end position="166"/>
    </location>
</feature>
<feature type="topological domain" description="Cytoplasmic" evidence="2">
    <location>
        <begin position="167"/>
        <end position="432"/>
    </location>
</feature>
<feature type="domain" description="HAMP" evidence="3">
    <location>
        <begin position="167"/>
        <end position="219"/>
    </location>
</feature>
<feature type="domain" description="Histidine kinase">
    <location>
        <begin position="234"/>
        <end position="432"/>
    </location>
</feature>
<feature type="modified residue" description="Phosphohistidine; by autocatalysis" evidence="1">
    <location>
        <position position="237"/>
    </location>
</feature>
<evidence type="ECO:0000250" key="1"/>
<evidence type="ECO:0000255" key="2"/>
<evidence type="ECO:0000255" key="3">
    <source>
        <dbReference type="PROSITE-ProRule" id="PRU00102"/>
    </source>
</evidence>
<evidence type="ECO:0000269" key="4">
    <source>
    </source>
</evidence>
<evidence type="ECO:0000305" key="5"/>
<reference key="1">
    <citation type="journal article" date="1996" name="Microbiology">
        <title>Systematic sequencing of the 283 kb 210 degrees-232 degrees region of the Bacillus subtilis genome containing the skin element and many sporulation genes.</title>
        <authorList>
            <person name="Mizuno M."/>
            <person name="Masuda S."/>
            <person name="Takemaru K."/>
            <person name="Hosono S."/>
            <person name="Sato T."/>
            <person name="Takeuchi M."/>
            <person name="Kobayashi Y."/>
        </authorList>
    </citation>
    <scope>NUCLEOTIDE SEQUENCE [GENOMIC DNA]</scope>
    <source>
        <strain>168 / JH642</strain>
    </source>
</reference>
<reference key="2">
    <citation type="journal article" date="1997" name="Nature">
        <title>The complete genome sequence of the Gram-positive bacterium Bacillus subtilis.</title>
        <authorList>
            <person name="Kunst F."/>
            <person name="Ogasawara N."/>
            <person name="Moszer I."/>
            <person name="Albertini A.M."/>
            <person name="Alloni G."/>
            <person name="Azevedo V."/>
            <person name="Bertero M.G."/>
            <person name="Bessieres P."/>
            <person name="Bolotin A."/>
            <person name="Borchert S."/>
            <person name="Borriss R."/>
            <person name="Boursier L."/>
            <person name="Brans A."/>
            <person name="Braun M."/>
            <person name="Brignell S.C."/>
            <person name="Bron S."/>
            <person name="Brouillet S."/>
            <person name="Bruschi C.V."/>
            <person name="Caldwell B."/>
            <person name="Capuano V."/>
            <person name="Carter N.M."/>
            <person name="Choi S.-K."/>
            <person name="Codani J.-J."/>
            <person name="Connerton I.F."/>
            <person name="Cummings N.J."/>
            <person name="Daniel R.A."/>
            <person name="Denizot F."/>
            <person name="Devine K.M."/>
            <person name="Duesterhoeft A."/>
            <person name="Ehrlich S.D."/>
            <person name="Emmerson P.T."/>
            <person name="Entian K.-D."/>
            <person name="Errington J."/>
            <person name="Fabret C."/>
            <person name="Ferrari E."/>
            <person name="Foulger D."/>
            <person name="Fritz C."/>
            <person name="Fujita M."/>
            <person name="Fujita Y."/>
            <person name="Fuma S."/>
            <person name="Galizzi A."/>
            <person name="Galleron N."/>
            <person name="Ghim S.-Y."/>
            <person name="Glaser P."/>
            <person name="Goffeau A."/>
            <person name="Golightly E.J."/>
            <person name="Grandi G."/>
            <person name="Guiseppi G."/>
            <person name="Guy B.J."/>
            <person name="Haga K."/>
            <person name="Haiech J."/>
            <person name="Harwood C.R."/>
            <person name="Henaut A."/>
            <person name="Hilbert H."/>
            <person name="Holsappel S."/>
            <person name="Hosono S."/>
            <person name="Hullo M.-F."/>
            <person name="Itaya M."/>
            <person name="Jones L.-M."/>
            <person name="Joris B."/>
            <person name="Karamata D."/>
            <person name="Kasahara Y."/>
            <person name="Klaerr-Blanchard M."/>
            <person name="Klein C."/>
            <person name="Kobayashi Y."/>
            <person name="Koetter P."/>
            <person name="Koningstein G."/>
            <person name="Krogh S."/>
            <person name="Kumano M."/>
            <person name="Kurita K."/>
            <person name="Lapidus A."/>
            <person name="Lardinois S."/>
            <person name="Lauber J."/>
            <person name="Lazarevic V."/>
            <person name="Lee S.-M."/>
            <person name="Levine A."/>
            <person name="Liu H."/>
            <person name="Masuda S."/>
            <person name="Mauel C."/>
            <person name="Medigue C."/>
            <person name="Medina N."/>
            <person name="Mellado R.P."/>
            <person name="Mizuno M."/>
            <person name="Moestl D."/>
            <person name="Nakai S."/>
            <person name="Noback M."/>
            <person name="Noone D."/>
            <person name="O'Reilly M."/>
            <person name="Ogawa K."/>
            <person name="Ogiwara A."/>
            <person name="Oudega B."/>
            <person name="Park S.-H."/>
            <person name="Parro V."/>
            <person name="Pohl T.M."/>
            <person name="Portetelle D."/>
            <person name="Porwollik S."/>
            <person name="Prescott A.M."/>
            <person name="Presecan E."/>
            <person name="Pujic P."/>
            <person name="Purnelle B."/>
            <person name="Rapoport G."/>
            <person name="Rey M."/>
            <person name="Reynolds S."/>
            <person name="Rieger M."/>
            <person name="Rivolta C."/>
            <person name="Rocha E."/>
            <person name="Roche B."/>
            <person name="Rose M."/>
            <person name="Sadaie Y."/>
            <person name="Sato T."/>
            <person name="Scanlan E."/>
            <person name="Schleich S."/>
            <person name="Schroeter R."/>
            <person name="Scoffone F."/>
            <person name="Sekiguchi J."/>
            <person name="Sekowska A."/>
            <person name="Seror S.J."/>
            <person name="Serror P."/>
            <person name="Shin B.-S."/>
            <person name="Soldo B."/>
            <person name="Sorokin A."/>
            <person name="Tacconi E."/>
            <person name="Takagi T."/>
            <person name="Takahashi H."/>
            <person name="Takemaru K."/>
            <person name="Takeuchi M."/>
            <person name="Tamakoshi A."/>
            <person name="Tanaka T."/>
            <person name="Terpstra P."/>
            <person name="Tognoni A."/>
            <person name="Tosato V."/>
            <person name="Uchiyama S."/>
            <person name="Vandenbol M."/>
            <person name="Vannier F."/>
            <person name="Vassarotti A."/>
            <person name="Viari A."/>
            <person name="Wambutt R."/>
            <person name="Wedler E."/>
            <person name="Wedler H."/>
            <person name="Weitzenegger T."/>
            <person name="Winters P."/>
            <person name="Wipat A."/>
            <person name="Yamamoto H."/>
            <person name="Yamane K."/>
            <person name="Yasumoto K."/>
            <person name="Yata K."/>
            <person name="Yoshida K."/>
            <person name="Yoshikawa H.-F."/>
            <person name="Zumstein E."/>
            <person name="Yoshikawa H."/>
            <person name="Danchin A."/>
        </authorList>
    </citation>
    <scope>NUCLEOTIDE SEQUENCE [LARGE SCALE GENOMIC DNA]</scope>
    <source>
        <strain>168</strain>
    </source>
</reference>
<reference key="3">
    <citation type="journal article" date="2001" name="J. Bacteriol.">
        <title>Comprehensive DNA microarray analysis of Bacillus subtilis two-component regulatory systems.</title>
        <authorList>
            <person name="Kobayashi K."/>
            <person name="Ogura M."/>
            <person name="Yamaguchi H."/>
            <person name="Yoshida K."/>
            <person name="Ogasawara N."/>
            <person name="Tanaka T."/>
            <person name="Fujita Y."/>
        </authorList>
    </citation>
    <scope>FUNCTION</scope>
</reference>
<dbReference type="EC" id="2.7.13.3"/>
<dbReference type="EMBL" id="D84432">
    <property type="protein sequence ID" value="BAA12372.1"/>
    <property type="molecule type" value="Genomic_DNA"/>
</dbReference>
<dbReference type="EMBL" id="AL009126">
    <property type="protein sequence ID" value="CAB14583.1"/>
    <property type="molecule type" value="Genomic_DNA"/>
</dbReference>
<dbReference type="PIR" id="G69977">
    <property type="entry name" value="G69977"/>
</dbReference>
<dbReference type="RefSeq" id="NP_390519.1">
    <property type="nucleotide sequence ID" value="NC_000964.3"/>
</dbReference>
<dbReference type="RefSeq" id="WP_003246194.1">
    <property type="nucleotide sequence ID" value="NZ_OZ025638.1"/>
</dbReference>
<dbReference type="SMR" id="P54444"/>
<dbReference type="FunCoup" id="P54444">
    <property type="interactions" value="45"/>
</dbReference>
<dbReference type="STRING" id="224308.BSU26420"/>
<dbReference type="PaxDb" id="224308-BSU26420"/>
<dbReference type="EnsemblBacteria" id="CAB14583">
    <property type="protein sequence ID" value="CAB14583"/>
    <property type="gene ID" value="BSU_26420"/>
</dbReference>
<dbReference type="GeneID" id="937662"/>
<dbReference type="KEGG" id="bsu:BSU26420"/>
<dbReference type="PATRIC" id="fig|224308.179.peg.2870"/>
<dbReference type="eggNOG" id="COG0642">
    <property type="taxonomic scope" value="Bacteria"/>
</dbReference>
<dbReference type="eggNOG" id="COG5002">
    <property type="taxonomic scope" value="Bacteria"/>
</dbReference>
<dbReference type="InParanoid" id="P54444"/>
<dbReference type="OrthoDB" id="335833at2"/>
<dbReference type="PhylomeDB" id="P54444"/>
<dbReference type="BioCyc" id="BSUB:BSU26420-MONOMER"/>
<dbReference type="Proteomes" id="UP000001570">
    <property type="component" value="Chromosome"/>
</dbReference>
<dbReference type="GO" id="GO:0005886">
    <property type="term" value="C:plasma membrane"/>
    <property type="evidence" value="ECO:0000318"/>
    <property type="project" value="GO_Central"/>
</dbReference>
<dbReference type="GO" id="GO:0005524">
    <property type="term" value="F:ATP binding"/>
    <property type="evidence" value="ECO:0007669"/>
    <property type="project" value="UniProtKB-KW"/>
</dbReference>
<dbReference type="GO" id="GO:0000155">
    <property type="term" value="F:phosphorelay sensor kinase activity"/>
    <property type="evidence" value="ECO:0000318"/>
    <property type="project" value="GO_Central"/>
</dbReference>
<dbReference type="CDD" id="cd00082">
    <property type="entry name" value="HisKA"/>
    <property type="match status" value="1"/>
</dbReference>
<dbReference type="Gene3D" id="1.10.287.130">
    <property type="match status" value="1"/>
</dbReference>
<dbReference type="Gene3D" id="6.10.340.10">
    <property type="match status" value="1"/>
</dbReference>
<dbReference type="Gene3D" id="3.30.565.10">
    <property type="entry name" value="Histidine kinase-like ATPase, C-terminal domain"/>
    <property type="match status" value="1"/>
</dbReference>
<dbReference type="InterPro" id="IPR050398">
    <property type="entry name" value="Bact_Sensor_His_Kinase"/>
</dbReference>
<dbReference type="InterPro" id="IPR003660">
    <property type="entry name" value="HAMP_dom"/>
</dbReference>
<dbReference type="InterPro" id="IPR036890">
    <property type="entry name" value="HATPase_C_sf"/>
</dbReference>
<dbReference type="InterPro" id="IPR003661">
    <property type="entry name" value="HisK_dim/P_dom"/>
</dbReference>
<dbReference type="InterPro" id="IPR036097">
    <property type="entry name" value="HisK_dim/P_sf"/>
</dbReference>
<dbReference type="PANTHER" id="PTHR45528">
    <property type="entry name" value="SENSOR HISTIDINE KINASE CPXA"/>
    <property type="match status" value="1"/>
</dbReference>
<dbReference type="PANTHER" id="PTHR45528:SF1">
    <property type="entry name" value="SENSOR HISTIDINE KINASE CPXA"/>
    <property type="match status" value="1"/>
</dbReference>
<dbReference type="Pfam" id="PF00672">
    <property type="entry name" value="HAMP"/>
    <property type="match status" value="1"/>
</dbReference>
<dbReference type="Pfam" id="PF00512">
    <property type="entry name" value="HisKA"/>
    <property type="match status" value="1"/>
</dbReference>
<dbReference type="SMART" id="SM00388">
    <property type="entry name" value="HisKA"/>
    <property type="match status" value="1"/>
</dbReference>
<dbReference type="SUPFAM" id="SSF55874">
    <property type="entry name" value="ATPase domain of HSP90 chaperone/DNA topoisomerase II/histidine kinase"/>
    <property type="match status" value="1"/>
</dbReference>
<dbReference type="SUPFAM" id="SSF47384">
    <property type="entry name" value="Homodimeric domain of signal transducing histidine kinase"/>
    <property type="match status" value="1"/>
</dbReference>
<dbReference type="PROSITE" id="PS50885">
    <property type="entry name" value="HAMP"/>
    <property type="match status" value="1"/>
</dbReference>
<comment type="function">
    <text evidence="4">Member of the two-component regulatory system YrkQ/YrkP. Probably activates YrkP by phosphorylation.</text>
</comment>
<comment type="catalytic activity">
    <reaction>
        <text>ATP + protein L-histidine = ADP + protein N-phospho-L-histidine.</text>
        <dbReference type="EC" id="2.7.13.3"/>
    </reaction>
</comment>
<comment type="subcellular location">
    <subcellularLocation>
        <location evidence="5">Cell membrane</location>
        <topology evidence="5">Multi-pass membrane protein</topology>
    </subcellularLocation>
</comment>
<protein>
    <recommendedName>
        <fullName>Sensor histidine kinase YrkQ</fullName>
        <ecNumber>2.7.13.3</ecNumber>
    </recommendedName>
</protein>
<accession>P54444</accession>
<name>YRKQ_BACSU</name>
<organism>
    <name type="scientific">Bacillus subtilis (strain 168)</name>
    <dbReference type="NCBI Taxonomy" id="224308"/>
    <lineage>
        <taxon>Bacteria</taxon>
        <taxon>Bacillati</taxon>
        <taxon>Bacillota</taxon>
        <taxon>Bacilli</taxon>
        <taxon>Bacillales</taxon>
        <taxon>Bacillaceae</taxon>
        <taxon>Bacillus</taxon>
    </lineage>
</organism>
<gene>
    <name type="primary">yrkQ</name>
    <name type="ordered locus">BSU26420</name>
</gene>